<organism>
    <name type="scientific">Methylococcus capsulatus (strain ATCC 33009 / NCIMB 11132 / Bath)</name>
    <dbReference type="NCBI Taxonomy" id="243233"/>
    <lineage>
        <taxon>Bacteria</taxon>
        <taxon>Pseudomonadati</taxon>
        <taxon>Pseudomonadota</taxon>
        <taxon>Gammaproteobacteria</taxon>
        <taxon>Methylococcales</taxon>
        <taxon>Methylococcaceae</taxon>
        <taxon>Methylococcus</taxon>
    </lineage>
</organism>
<accession>Q606M0</accession>
<name>KTHY_METCA</name>
<sequence>MTPGKFITLEGGEGVGKSTNVDFVVSRLRARGLKVVATREPGGTAFGEAVREIFLRQDTVRPEAELLLLFAARVHHLREVIEPALRRGDWVVCDRFTDASYAYQGAGRGIAPGVIDFLRDWIQAGLRPDLTLLLDAPVDTGLKRAHQRSGPDRLEREDSAFFARVREGYLALARAEPGRIRVIDADRPLALVQTAIATQVDSLLAGHV</sequence>
<proteinExistence type="inferred from homology"/>
<reference key="1">
    <citation type="journal article" date="2004" name="PLoS Biol.">
        <title>Genomic insights into methanotrophy: the complete genome sequence of Methylococcus capsulatus (Bath).</title>
        <authorList>
            <person name="Ward N.L."/>
            <person name="Larsen O."/>
            <person name="Sakwa J."/>
            <person name="Bruseth L."/>
            <person name="Khouri H.M."/>
            <person name="Durkin A.S."/>
            <person name="Dimitrov G."/>
            <person name="Jiang L."/>
            <person name="Scanlan D."/>
            <person name="Kang K.H."/>
            <person name="Lewis M.R."/>
            <person name="Nelson K.E."/>
            <person name="Methe B.A."/>
            <person name="Wu M."/>
            <person name="Heidelberg J.F."/>
            <person name="Paulsen I.T."/>
            <person name="Fouts D.E."/>
            <person name="Ravel J."/>
            <person name="Tettelin H."/>
            <person name="Ren Q."/>
            <person name="Read T.D."/>
            <person name="DeBoy R.T."/>
            <person name="Seshadri R."/>
            <person name="Salzberg S.L."/>
            <person name="Jensen H.B."/>
            <person name="Birkeland N.K."/>
            <person name="Nelson W.C."/>
            <person name="Dodson R.J."/>
            <person name="Grindhaug S.H."/>
            <person name="Holt I.E."/>
            <person name="Eidhammer I."/>
            <person name="Jonasen I."/>
            <person name="Vanaken S."/>
            <person name="Utterback T.R."/>
            <person name="Feldblyum T.V."/>
            <person name="Fraser C.M."/>
            <person name="Lillehaug J.R."/>
            <person name="Eisen J.A."/>
        </authorList>
    </citation>
    <scope>NUCLEOTIDE SEQUENCE [LARGE SCALE GENOMIC DNA]</scope>
    <source>
        <strain>ATCC 33009 / NCIMB 11132 / Bath</strain>
    </source>
</reference>
<evidence type="ECO:0000255" key="1">
    <source>
        <dbReference type="HAMAP-Rule" id="MF_00165"/>
    </source>
</evidence>
<keyword id="KW-0067">ATP-binding</keyword>
<keyword id="KW-0418">Kinase</keyword>
<keyword id="KW-0545">Nucleotide biosynthesis</keyword>
<keyword id="KW-0547">Nucleotide-binding</keyword>
<keyword id="KW-1185">Reference proteome</keyword>
<keyword id="KW-0808">Transferase</keyword>
<comment type="function">
    <text evidence="1">Phosphorylation of dTMP to form dTDP in both de novo and salvage pathways of dTTP synthesis.</text>
</comment>
<comment type="catalytic activity">
    <reaction evidence="1">
        <text>dTMP + ATP = dTDP + ADP</text>
        <dbReference type="Rhea" id="RHEA:13517"/>
        <dbReference type="ChEBI" id="CHEBI:30616"/>
        <dbReference type="ChEBI" id="CHEBI:58369"/>
        <dbReference type="ChEBI" id="CHEBI:63528"/>
        <dbReference type="ChEBI" id="CHEBI:456216"/>
        <dbReference type="EC" id="2.7.4.9"/>
    </reaction>
</comment>
<comment type="similarity">
    <text evidence="1">Belongs to the thymidylate kinase family.</text>
</comment>
<protein>
    <recommendedName>
        <fullName evidence="1">Thymidylate kinase</fullName>
        <ecNumber evidence="1">2.7.4.9</ecNumber>
    </recommendedName>
    <alternativeName>
        <fullName evidence="1">dTMP kinase</fullName>
    </alternativeName>
</protein>
<dbReference type="EC" id="2.7.4.9" evidence="1"/>
<dbReference type="EMBL" id="AE017282">
    <property type="protein sequence ID" value="AAU91791.1"/>
    <property type="molecule type" value="Genomic_DNA"/>
</dbReference>
<dbReference type="RefSeq" id="WP_010961241.1">
    <property type="nucleotide sequence ID" value="NC_002977.6"/>
</dbReference>
<dbReference type="SMR" id="Q606M0"/>
<dbReference type="STRING" id="243233.MCA1996"/>
<dbReference type="GeneID" id="88224224"/>
<dbReference type="KEGG" id="mca:MCA1996"/>
<dbReference type="eggNOG" id="COG0125">
    <property type="taxonomic scope" value="Bacteria"/>
</dbReference>
<dbReference type="HOGENOM" id="CLU_049131_0_2_6"/>
<dbReference type="Proteomes" id="UP000006821">
    <property type="component" value="Chromosome"/>
</dbReference>
<dbReference type="GO" id="GO:0005829">
    <property type="term" value="C:cytosol"/>
    <property type="evidence" value="ECO:0007669"/>
    <property type="project" value="TreeGrafter"/>
</dbReference>
<dbReference type="GO" id="GO:0005524">
    <property type="term" value="F:ATP binding"/>
    <property type="evidence" value="ECO:0007669"/>
    <property type="project" value="UniProtKB-UniRule"/>
</dbReference>
<dbReference type="GO" id="GO:0004798">
    <property type="term" value="F:dTMP kinase activity"/>
    <property type="evidence" value="ECO:0007669"/>
    <property type="project" value="UniProtKB-UniRule"/>
</dbReference>
<dbReference type="GO" id="GO:0006233">
    <property type="term" value="P:dTDP biosynthetic process"/>
    <property type="evidence" value="ECO:0007669"/>
    <property type="project" value="InterPro"/>
</dbReference>
<dbReference type="GO" id="GO:0006235">
    <property type="term" value="P:dTTP biosynthetic process"/>
    <property type="evidence" value="ECO:0007669"/>
    <property type="project" value="UniProtKB-UniRule"/>
</dbReference>
<dbReference type="GO" id="GO:0006227">
    <property type="term" value="P:dUDP biosynthetic process"/>
    <property type="evidence" value="ECO:0007669"/>
    <property type="project" value="TreeGrafter"/>
</dbReference>
<dbReference type="CDD" id="cd01672">
    <property type="entry name" value="TMPK"/>
    <property type="match status" value="1"/>
</dbReference>
<dbReference type="FunFam" id="3.40.50.300:FF:000225">
    <property type="entry name" value="Thymidylate kinase"/>
    <property type="match status" value="1"/>
</dbReference>
<dbReference type="Gene3D" id="3.40.50.300">
    <property type="entry name" value="P-loop containing nucleotide triphosphate hydrolases"/>
    <property type="match status" value="1"/>
</dbReference>
<dbReference type="HAMAP" id="MF_00165">
    <property type="entry name" value="Thymidylate_kinase"/>
    <property type="match status" value="1"/>
</dbReference>
<dbReference type="InterPro" id="IPR027417">
    <property type="entry name" value="P-loop_NTPase"/>
</dbReference>
<dbReference type="InterPro" id="IPR039430">
    <property type="entry name" value="Thymidylate_kin-like_dom"/>
</dbReference>
<dbReference type="InterPro" id="IPR018094">
    <property type="entry name" value="Thymidylate_kinase"/>
</dbReference>
<dbReference type="NCBIfam" id="TIGR00041">
    <property type="entry name" value="DTMP_kinase"/>
    <property type="match status" value="1"/>
</dbReference>
<dbReference type="PANTHER" id="PTHR10344">
    <property type="entry name" value="THYMIDYLATE KINASE"/>
    <property type="match status" value="1"/>
</dbReference>
<dbReference type="PANTHER" id="PTHR10344:SF4">
    <property type="entry name" value="UMP-CMP KINASE 2, MITOCHONDRIAL"/>
    <property type="match status" value="1"/>
</dbReference>
<dbReference type="Pfam" id="PF02223">
    <property type="entry name" value="Thymidylate_kin"/>
    <property type="match status" value="1"/>
</dbReference>
<dbReference type="SUPFAM" id="SSF52540">
    <property type="entry name" value="P-loop containing nucleoside triphosphate hydrolases"/>
    <property type="match status" value="1"/>
</dbReference>
<gene>
    <name evidence="1" type="primary">tmk</name>
    <name type="ordered locus">MCA1996</name>
</gene>
<feature type="chain" id="PRO_0000155300" description="Thymidylate kinase">
    <location>
        <begin position="1"/>
        <end position="208"/>
    </location>
</feature>
<feature type="binding site" evidence="1">
    <location>
        <begin position="11"/>
        <end position="18"/>
    </location>
    <ligand>
        <name>ATP</name>
        <dbReference type="ChEBI" id="CHEBI:30616"/>
    </ligand>
</feature>